<dbReference type="EC" id="3.6.5.3" evidence="2"/>
<dbReference type="EMBL" id="CP000612">
    <property type="protein sequence ID" value="ABO48748.1"/>
    <property type="molecule type" value="Genomic_DNA"/>
</dbReference>
<dbReference type="EMBL" id="CP000612">
    <property type="protein sequence ID" value="ABO48762.1"/>
    <property type="molecule type" value="Genomic_DNA"/>
</dbReference>
<dbReference type="RefSeq" id="WP_011876589.1">
    <property type="nucleotide sequence ID" value="NC_009253.1"/>
</dbReference>
<dbReference type="SMR" id="A4J0Z5"/>
<dbReference type="STRING" id="349161.Dred_0199"/>
<dbReference type="KEGG" id="drm:Dred_0199"/>
<dbReference type="KEGG" id="drm:Dred_0213"/>
<dbReference type="eggNOG" id="COG0050">
    <property type="taxonomic scope" value="Bacteria"/>
</dbReference>
<dbReference type="HOGENOM" id="CLU_007265_0_0_9"/>
<dbReference type="OrthoDB" id="9804504at2"/>
<dbReference type="Proteomes" id="UP000001556">
    <property type="component" value="Chromosome"/>
</dbReference>
<dbReference type="GO" id="GO:0005829">
    <property type="term" value="C:cytosol"/>
    <property type="evidence" value="ECO:0007669"/>
    <property type="project" value="TreeGrafter"/>
</dbReference>
<dbReference type="GO" id="GO:0005525">
    <property type="term" value="F:GTP binding"/>
    <property type="evidence" value="ECO:0007669"/>
    <property type="project" value="UniProtKB-UniRule"/>
</dbReference>
<dbReference type="GO" id="GO:0003924">
    <property type="term" value="F:GTPase activity"/>
    <property type="evidence" value="ECO:0007669"/>
    <property type="project" value="InterPro"/>
</dbReference>
<dbReference type="GO" id="GO:0003746">
    <property type="term" value="F:translation elongation factor activity"/>
    <property type="evidence" value="ECO:0007669"/>
    <property type="project" value="UniProtKB-UniRule"/>
</dbReference>
<dbReference type="CDD" id="cd01884">
    <property type="entry name" value="EF_Tu"/>
    <property type="match status" value="1"/>
</dbReference>
<dbReference type="CDD" id="cd03697">
    <property type="entry name" value="EFTU_II"/>
    <property type="match status" value="1"/>
</dbReference>
<dbReference type="CDD" id="cd03707">
    <property type="entry name" value="EFTU_III"/>
    <property type="match status" value="1"/>
</dbReference>
<dbReference type="FunFam" id="2.40.30.10:FF:000001">
    <property type="entry name" value="Elongation factor Tu"/>
    <property type="match status" value="1"/>
</dbReference>
<dbReference type="FunFam" id="3.40.50.300:FF:000003">
    <property type="entry name" value="Elongation factor Tu"/>
    <property type="match status" value="1"/>
</dbReference>
<dbReference type="Gene3D" id="3.40.50.300">
    <property type="entry name" value="P-loop containing nucleotide triphosphate hydrolases"/>
    <property type="match status" value="1"/>
</dbReference>
<dbReference type="Gene3D" id="2.40.30.10">
    <property type="entry name" value="Translation factors"/>
    <property type="match status" value="2"/>
</dbReference>
<dbReference type="HAMAP" id="MF_00118_B">
    <property type="entry name" value="EF_Tu_B"/>
    <property type="match status" value="1"/>
</dbReference>
<dbReference type="InterPro" id="IPR041709">
    <property type="entry name" value="EF-Tu_GTP-bd"/>
</dbReference>
<dbReference type="InterPro" id="IPR050055">
    <property type="entry name" value="EF-Tu_GTPase"/>
</dbReference>
<dbReference type="InterPro" id="IPR004161">
    <property type="entry name" value="EFTu-like_2"/>
</dbReference>
<dbReference type="InterPro" id="IPR033720">
    <property type="entry name" value="EFTU_2"/>
</dbReference>
<dbReference type="InterPro" id="IPR031157">
    <property type="entry name" value="G_TR_CS"/>
</dbReference>
<dbReference type="InterPro" id="IPR027417">
    <property type="entry name" value="P-loop_NTPase"/>
</dbReference>
<dbReference type="InterPro" id="IPR005225">
    <property type="entry name" value="Small_GTP-bd"/>
</dbReference>
<dbReference type="InterPro" id="IPR000795">
    <property type="entry name" value="T_Tr_GTP-bd_dom"/>
</dbReference>
<dbReference type="InterPro" id="IPR009000">
    <property type="entry name" value="Transl_B-barrel_sf"/>
</dbReference>
<dbReference type="InterPro" id="IPR009001">
    <property type="entry name" value="Transl_elong_EF1A/Init_IF2_C"/>
</dbReference>
<dbReference type="InterPro" id="IPR004541">
    <property type="entry name" value="Transl_elong_EFTu/EF1A_bac/org"/>
</dbReference>
<dbReference type="InterPro" id="IPR004160">
    <property type="entry name" value="Transl_elong_EFTu/EF1A_C"/>
</dbReference>
<dbReference type="NCBIfam" id="TIGR00485">
    <property type="entry name" value="EF-Tu"/>
    <property type="match status" value="1"/>
</dbReference>
<dbReference type="NCBIfam" id="NF000766">
    <property type="entry name" value="PRK00049.1"/>
    <property type="match status" value="1"/>
</dbReference>
<dbReference type="NCBIfam" id="NF009372">
    <property type="entry name" value="PRK12735.1"/>
    <property type="match status" value="1"/>
</dbReference>
<dbReference type="NCBIfam" id="NF009373">
    <property type="entry name" value="PRK12736.1"/>
    <property type="match status" value="1"/>
</dbReference>
<dbReference type="NCBIfam" id="TIGR00231">
    <property type="entry name" value="small_GTP"/>
    <property type="match status" value="1"/>
</dbReference>
<dbReference type="PANTHER" id="PTHR43721:SF22">
    <property type="entry name" value="ELONGATION FACTOR TU, MITOCHONDRIAL"/>
    <property type="match status" value="1"/>
</dbReference>
<dbReference type="PANTHER" id="PTHR43721">
    <property type="entry name" value="ELONGATION FACTOR TU-RELATED"/>
    <property type="match status" value="1"/>
</dbReference>
<dbReference type="Pfam" id="PF00009">
    <property type="entry name" value="GTP_EFTU"/>
    <property type="match status" value="1"/>
</dbReference>
<dbReference type="Pfam" id="PF03144">
    <property type="entry name" value="GTP_EFTU_D2"/>
    <property type="match status" value="1"/>
</dbReference>
<dbReference type="Pfam" id="PF03143">
    <property type="entry name" value="GTP_EFTU_D3"/>
    <property type="match status" value="1"/>
</dbReference>
<dbReference type="PRINTS" id="PR00315">
    <property type="entry name" value="ELONGATNFCT"/>
</dbReference>
<dbReference type="SUPFAM" id="SSF50465">
    <property type="entry name" value="EF-Tu/eEF-1alpha/eIF2-gamma C-terminal domain"/>
    <property type="match status" value="1"/>
</dbReference>
<dbReference type="SUPFAM" id="SSF52540">
    <property type="entry name" value="P-loop containing nucleoside triphosphate hydrolases"/>
    <property type="match status" value="1"/>
</dbReference>
<dbReference type="SUPFAM" id="SSF50447">
    <property type="entry name" value="Translation proteins"/>
    <property type="match status" value="1"/>
</dbReference>
<dbReference type="PROSITE" id="PS00301">
    <property type="entry name" value="G_TR_1"/>
    <property type="match status" value="1"/>
</dbReference>
<dbReference type="PROSITE" id="PS51722">
    <property type="entry name" value="G_TR_2"/>
    <property type="match status" value="1"/>
</dbReference>
<proteinExistence type="inferred from homology"/>
<feature type="chain" id="PRO_1000071361" description="Elongation factor Tu">
    <location>
        <begin position="1"/>
        <end position="400"/>
    </location>
</feature>
<feature type="domain" description="tr-type G">
    <location>
        <begin position="10"/>
        <end position="209"/>
    </location>
</feature>
<feature type="region of interest" description="G1" evidence="1">
    <location>
        <begin position="19"/>
        <end position="26"/>
    </location>
</feature>
<feature type="region of interest" description="G2" evidence="1">
    <location>
        <begin position="60"/>
        <end position="64"/>
    </location>
</feature>
<feature type="region of interest" description="G3" evidence="1">
    <location>
        <begin position="81"/>
        <end position="84"/>
    </location>
</feature>
<feature type="region of interest" description="G4" evidence="1">
    <location>
        <begin position="136"/>
        <end position="139"/>
    </location>
</feature>
<feature type="region of interest" description="G5" evidence="1">
    <location>
        <begin position="174"/>
        <end position="176"/>
    </location>
</feature>
<feature type="binding site" evidence="2">
    <location>
        <begin position="19"/>
        <end position="26"/>
    </location>
    <ligand>
        <name>GTP</name>
        <dbReference type="ChEBI" id="CHEBI:37565"/>
    </ligand>
</feature>
<feature type="binding site" evidence="2">
    <location>
        <position position="26"/>
    </location>
    <ligand>
        <name>Mg(2+)</name>
        <dbReference type="ChEBI" id="CHEBI:18420"/>
    </ligand>
</feature>
<feature type="binding site" evidence="2">
    <location>
        <begin position="81"/>
        <end position="85"/>
    </location>
    <ligand>
        <name>GTP</name>
        <dbReference type="ChEBI" id="CHEBI:37565"/>
    </ligand>
</feature>
<feature type="binding site" evidence="2">
    <location>
        <begin position="136"/>
        <end position="139"/>
    </location>
    <ligand>
        <name>GTP</name>
        <dbReference type="ChEBI" id="CHEBI:37565"/>
    </ligand>
</feature>
<protein>
    <recommendedName>
        <fullName evidence="2">Elongation factor Tu</fullName>
        <shortName evidence="2">EF-Tu</shortName>
        <ecNumber evidence="2">3.6.5.3</ecNumber>
    </recommendedName>
</protein>
<sequence length="400" mass="43951">MAKAKYERTKPHVNIGTIGHVDHGKTTLTAAITVVLSTSGGASVKRYDEIDNAPEERERGITINTAHVEYETANRHYAHVDCPGHADYVKNMITGAAQMDGAILVVSAADGPMPQTREHILLSRQVGVPYIVVFLNKSDMVDDEELLELVDMEVRELLNSYEFPGDDTPIVAGSGLKALECGCGKRECEWCGKIWELMDNVDAYIPTPERAVDKPFLMPVEDVFSITGRGTVATGRVERGQVKVQDEVEIVGLNEKPRKTVVTGVEMFRKLLDFAQAGDNIGALLRGVDRKEIERGQVLAKPGSINPHTKYSAEVYVLTKEEGGRHTPFFNGYRPQFYFRTTDVTGIVQLPEGVEMVMPGDNIKVDVDLITPIAIEEGLRFAIREGGRTVGAGVVTGIRE</sequence>
<gene>
    <name evidence="2" type="primary">tuf</name>
    <name type="ordered locus">Dred_0199</name>
    <name type="ordered locus">Dred_0213</name>
</gene>
<keyword id="KW-0963">Cytoplasm</keyword>
<keyword id="KW-0251">Elongation factor</keyword>
<keyword id="KW-0342">GTP-binding</keyword>
<keyword id="KW-0378">Hydrolase</keyword>
<keyword id="KW-0460">Magnesium</keyword>
<keyword id="KW-0479">Metal-binding</keyword>
<keyword id="KW-0547">Nucleotide-binding</keyword>
<keyword id="KW-0648">Protein biosynthesis</keyword>
<keyword id="KW-1185">Reference proteome</keyword>
<comment type="function">
    <text evidence="2">GTP hydrolase that promotes the GTP-dependent binding of aminoacyl-tRNA to the A-site of ribosomes during protein biosynthesis.</text>
</comment>
<comment type="catalytic activity">
    <reaction evidence="2">
        <text>GTP + H2O = GDP + phosphate + H(+)</text>
        <dbReference type="Rhea" id="RHEA:19669"/>
        <dbReference type="ChEBI" id="CHEBI:15377"/>
        <dbReference type="ChEBI" id="CHEBI:15378"/>
        <dbReference type="ChEBI" id="CHEBI:37565"/>
        <dbReference type="ChEBI" id="CHEBI:43474"/>
        <dbReference type="ChEBI" id="CHEBI:58189"/>
        <dbReference type="EC" id="3.6.5.3"/>
    </reaction>
    <physiologicalReaction direction="left-to-right" evidence="2">
        <dbReference type="Rhea" id="RHEA:19670"/>
    </physiologicalReaction>
</comment>
<comment type="subunit">
    <text evidence="2">Monomer.</text>
</comment>
<comment type="subcellular location">
    <subcellularLocation>
        <location evidence="2">Cytoplasm</location>
    </subcellularLocation>
</comment>
<comment type="similarity">
    <text evidence="2">Belongs to the TRAFAC class translation factor GTPase superfamily. Classic translation factor GTPase family. EF-Tu/EF-1A subfamily.</text>
</comment>
<organism>
    <name type="scientific">Desulforamulus reducens (strain ATCC BAA-1160 / DSM 100696 / MI-1)</name>
    <name type="common">Desulfotomaculum reducens</name>
    <dbReference type="NCBI Taxonomy" id="349161"/>
    <lineage>
        <taxon>Bacteria</taxon>
        <taxon>Bacillati</taxon>
        <taxon>Bacillota</taxon>
        <taxon>Clostridia</taxon>
        <taxon>Eubacteriales</taxon>
        <taxon>Peptococcaceae</taxon>
        <taxon>Desulforamulus</taxon>
    </lineage>
</organism>
<evidence type="ECO:0000250" key="1"/>
<evidence type="ECO:0000255" key="2">
    <source>
        <dbReference type="HAMAP-Rule" id="MF_00118"/>
    </source>
</evidence>
<name>EFTU_DESRM</name>
<accession>A4J0Z5</accession>
<reference key="1">
    <citation type="submission" date="2007-03" db="EMBL/GenBank/DDBJ databases">
        <title>Complete sequence of Desulfotomaculum reducens MI-1.</title>
        <authorList>
            <consortium name="US DOE Joint Genome Institute"/>
            <person name="Copeland A."/>
            <person name="Lucas S."/>
            <person name="Lapidus A."/>
            <person name="Barry K."/>
            <person name="Detter J.C."/>
            <person name="Glavina del Rio T."/>
            <person name="Hammon N."/>
            <person name="Israni S."/>
            <person name="Dalin E."/>
            <person name="Tice H."/>
            <person name="Pitluck S."/>
            <person name="Sims D."/>
            <person name="Brettin T."/>
            <person name="Bruce D."/>
            <person name="Han C."/>
            <person name="Tapia R."/>
            <person name="Schmutz J."/>
            <person name="Larimer F."/>
            <person name="Land M."/>
            <person name="Hauser L."/>
            <person name="Kyrpides N."/>
            <person name="Kim E."/>
            <person name="Tebo B.M."/>
            <person name="Richardson P."/>
        </authorList>
    </citation>
    <scope>NUCLEOTIDE SEQUENCE [LARGE SCALE GENOMIC DNA]</scope>
    <source>
        <strain>ATCC BAA-1160 / DSM 100696 / MI-1</strain>
    </source>
</reference>